<evidence type="ECO:0000250" key="1"/>
<evidence type="ECO:0000255" key="2"/>
<evidence type="ECO:0000255" key="3">
    <source>
        <dbReference type="PROSITE-ProRule" id="PRU01258"/>
    </source>
</evidence>
<evidence type="ECO:0000305" key="4"/>
<name>IDGF1_DROSI</name>
<gene>
    <name type="primary">Idgf1</name>
</gene>
<protein>
    <recommendedName>
        <fullName>Chitinase-like protein Idgf1</fullName>
    </recommendedName>
    <alternativeName>
        <fullName>Imaginal disk growth factor protein 1</fullName>
    </alternativeName>
</protein>
<proteinExistence type="inferred from homology"/>
<organism>
    <name type="scientific">Drosophila simulans</name>
    <name type="common">Fruit fly</name>
    <dbReference type="NCBI Taxonomy" id="7240"/>
    <lineage>
        <taxon>Eukaryota</taxon>
        <taxon>Metazoa</taxon>
        <taxon>Ecdysozoa</taxon>
        <taxon>Arthropoda</taxon>
        <taxon>Hexapoda</taxon>
        <taxon>Insecta</taxon>
        <taxon>Pterygota</taxon>
        <taxon>Neoptera</taxon>
        <taxon>Endopterygota</taxon>
        <taxon>Diptera</taxon>
        <taxon>Brachycera</taxon>
        <taxon>Muscomorpha</taxon>
        <taxon>Ephydroidea</taxon>
        <taxon>Drosophilidae</taxon>
        <taxon>Drosophila</taxon>
        <taxon>Sophophora</taxon>
    </lineage>
</organism>
<comment type="function">
    <text evidence="1">Cooperates with insulin-like peptides to stimulate the proliferation, polarization and motility of imaginal disk cells. May act by stabilizing the binding of insulin-like peptides to its receptor through a simultaneous interaction with both molecules to form a multiprotein signaling complex (By similarity).</text>
</comment>
<comment type="subcellular location">
    <subcellularLocation>
        <location evidence="1">Secreted</location>
    </subcellularLocation>
    <text evidence="1">Secreted in hemolymph. It is probably transported to target tissues via hemolymph.</text>
</comment>
<comment type="PTM">
    <text evidence="1">Glycosylated.</text>
</comment>
<comment type="miscellaneous">
    <text>Lacks the typical Glu active site in position 150 that is replaced by a Gln residue, preventing the hydrolase activity. Its precise function remains unclear.</text>
</comment>
<comment type="similarity">
    <text evidence="4">Belongs to the glycosyl hydrolase 18 family. IDGF subfamily.</text>
</comment>
<accession>Q8MX41</accession>
<reference key="1">
    <citation type="journal article" date="2002" name="Genetics">
        <title>Polymorphism patterns in two tightly linked developmental genes, Idgf1 and Idgf3, of Drosophila melanogaster.</title>
        <authorList>
            <person name="Zurovcova M."/>
            <person name="Ayala F.J."/>
        </authorList>
    </citation>
    <scope>NUCLEOTIDE SEQUENCE [GENOMIC DNA]</scope>
    <source>
        <strain>5F</strain>
    </source>
</reference>
<sequence length="439" mass="49441">MRFQLFYILGLLSVTSLTQAANNLVCYYDSTSYLRQGLAKMHTNELDLALQFCTHLVYGYAGLKSGTLELFSLNVDLDMFYYKDITALRQKFPQLKILLSVGGDRDVDEAHPNKYVELLEANRTAQQNFIDSSMILLKRNGFDGLDLAFQLPRNKPRKVHGSLGTYWKSFKKLFTGDFVVDPLAEQHKSQFTDLVGNIKNAFRSANLMLSLTVLPNVNSTWYFDVPKLHPQFDYINLAAFDFLTPLRNPEEADYTAPIFFQDEQNRLPHLNVEFQVNYWLQNHCPGQKLNLGIASYGRAWKLSKESGLSGAPIVHETCGAAPGGIQIQSAEGLLSWPEICSKLSQNASAQYRGELAPLRKVTDLTQKYGNYALRPADENGDFGVWLSFDDPDFAGIKAVYAKSKGLGGIALFDLSYDDFRGLCTGQKYPIVRSIKYFMG</sequence>
<dbReference type="EMBL" id="AF394711">
    <property type="protein sequence ID" value="AAM69643.1"/>
    <property type="molecule type" value="Genomic_DNA"/>
</dbReference>
<dbReference type="SMR" id="Q8MX41"/>
<dbReference type="CAZy" id="GH18">
    <property type="family name" value="Glycoside Hydrolase Family 18"/>
</dbReference>
<dbReference type="GlyCosmos" id="Q8MX41">
    <property type="glycosylation" value="3 sites, No reported glycans"/>
</dbReference>
<dbReference type="OrthoDB" id="76388at2759"/>
<dbReference type="GO" id="GO:0005576">
    <property type="term" value="C:extracellular region"/>
    <property type="evidence" value="ECO:0007669"/>
    <property type="project" value="UniProtKB-SubCell"/>
</dbReference>
<dbReference type="GO" id="GO:0008061">
    <property type="term" value="F:chitin binding"/>
    <property type="evidence" value="ECO:0007669"/>
    <property type="project" value="InterPro"/>
</dbReference>
<dbReference type="GO" id="GO:0004568">
    <property type="term" value="F:chitinase activity"/>
    <property type="evidence" value="ECO:0007669"/>
    <property type="project" value="TreeGrafter"/>
</dbReference>
<dbReference type="GO" id="GO:0008084">
    <property type="term" value="F:imaginal disc growth factor receptor binding"/>
    <property type="evidence" value="ECO:0000250"/>
    <property type="project" value="UniProtKB"/>
</dbReference>
<dbReference type="GO" id="GO:0005975">
    <property type="term" value="P:carbohydrate metabolic process"/>
    <property type="evidence" value="ECO:0007669"/>
    <property type="project" value="InterPro"/>
</dbReference>
<dbReference type="GO" id="GO:0006032">
    <property type="term" value="P:chitin catabolic process"/>
    <property type="evidence" value="ECO:0007669"/>
    <property type="project" value="TreeGrafter"/>
</dbReference>
<dbReference type="GO" id="GO:0040003">
    <property type="term" value="P:chitin-based cuticle development"/>
    <property type="evidence" value="ECO:0007669"/>
    <property type="project" value="EnsemblMetazoa"/>
</dbReference>
<dbReference type="GO" id="GO:0018990">
    <property type="term" value="P:ecdysis, chitin-based cuticle"/>
    <property type="evidence" value="ECO:0007669"/>
    <property type="project" value="EnsemblMetazoa"/>
</dbReference>
<dbReference type="GO" id="GO:1990399">
    <property type="term" value="P:epithelium regeneration"/>
    <property type="evidence" value="ECO:0007669"/>
    <property type="project" value="EnsemblMetazoa"/>
</dbReference>
<dbReference type="GO" id="GO:0007444">
    <property type="term" value="P:imaginal disc development"/>
    <property type="evidence" value="ECO:0000250"/>
    <property type="project" value="UniProtKB"/>
</dbReference>
<dbReference type="GO" id="GO:2000035">
    <property type="term" value="P:regulation of stem cell division"/>
    <property type="evidence" value="ECO:0007669"/>
    <property type="project" value="EnsemblMetazoa"/>
</dbReference>
<dbReference type="GO" id="GO:0042060">
    <property type="term" value="P:wound healing"/>
    <property type="evidence" value="ECO:0007669"/>
    <property type="project" value="EnsemblMetazoa"/>
</dbReference>
<dbReference type="CDD" id="cd02873">
    <property type="entry name" value="GH18_IDGF"/>
    <property type="match status" value="1"/>
</dbReference>
<dbReference type="FunFam" id="3.10.50.10:FF:000007">
    <property type="entry name" value="chitinase-like protein Idgf4"/>
    <property type="match status" value="1"/>
</dbReference>
<dbReference type="FunFam" id="3.20.20.80:FF:000071">
    <property type="entry name" value="Imaginal disc growth factor"/>
    <property type="match status" value="1"/>
</dbReference>
<dbReference type="Gene3D" id="3.10.50.10">
    <property type="match status" value="1"/>
</dbReference>
<dbReference type="Gene3D" id="3.20.20.80">
    <property type="entry name" value="Glycosidases"/>
    <property type="match status" value="1"/>
</dbReference>
<dbReference type="InterPro" id="IPR011583">
    <property type="entry name" value="Chitinase_II/V-like_cat"/>
</dbReference>
<dbReference type="InterPro" id="IPR029070">
    <property type="entry name" value="Chitinase_insertion_sf"/>
</dbReference>
<dbReference type="InterPro" id="IPR001223">
    <property type="entry name" value="Glyco_hydro18_cat"/>
</dbReference>
<dbReference type="InterPro" id="IPR017853">
    <property type="entry name" value="Glycoside_hydrolase_SF"/>
</dbReference>
<dbReference type="InterPro" id="IPR050314">
    <property type="entry name" value="Glycosyl_Hydrlase_18"/>
</dbReference>
<dbReference type="InterPro" id="IPR015520">
    <property type="entry name" value="IDGF"/>
</dbReference>
<dbReference type="PANTHER" id="PTHR11177">
    <property type="entry name" value="CHITINASE"/>
    <property type="match status" value="1"/>
</dbReference>
<dbReference type="PANTHER" id="PTHR11177:SF235">
    <property type="entry name" value="CHITINASE-LIKE PROTEIN IDGF1-RELATED"/>
    <property type="match status" value="1"/>
</dbReference>
<dbReference type="Pfam" id="PF00704">
    <property type="entry name" value="Glyco_hydro_18"/>
    <property type="match status" value="1"/>
</dbReference>
<dbReference type="SMART" id="SM00636">
    <property type="entry name" value="Glyco_18"/>
    <property type="match status" value="1"/>
</dbReference>
<dbReference type="SUPFAM" id="SSF51445">
    <property type="entry name" value="(Trans)glycosidases"/>
    <property type="match status" value="1"/>
</dbReference>
<dbReference type="SUPFAM" id="SSF54556">
    <property type="entry name" value="Chitinase insertion domain"/>
    <property type="match status" value="1"/>
</dbReference>
<dbReference type="PROSITE" id="PS51910">
    <property type="entry name" value="GH18_2"/>
    <property type="match status" value="1"/>
</dbReference>
<feature type="signal peptide" evidence="1">
    <location>
        <begin position="1"/>
        <end position="20"/>
    </location>
</feature>
<feature type="chain" id="PRO_0000011981" description="Chitinase-like protein Idgf1">
    <location>
        <begin position="21"/>
        <end position="439"/>
    </location>
</feature>
<feature type="domain" description="GH18" evidence="3">
    <location>
        <begin position="22"/>
        <end position="439"/>
    </location>
</feature>
<feature type="glycosylation site" description="N-linked (GlcNAc...) asparagine" evidence="2">
    <location>
        <position position="122"/>
    </location>
</feature>
<feature type="glycosylation site" description="N-linked (GlcNAc...) asparagine" evidence="1">
    <location>
        <position position="218"/>
    </location>
</feature>
<feature type="glycosylation site" description="N-linked (GlcNAc...) asparagine" evidence="2">
    <location>
        <position position="346"/>
    </location>
</feature>
<feature type="disulfide bond" evidence="3">
    <location>
        <begin position="26"/>
        <end position="53"/>
    </location>
</feature>
<feature type="disulfide bond" evidence="1">
    <location>
        <begin position="340"/>
        <end position="423"/>
    </location>
</feature>
<keyword id="KW-0217">Developmental protein</keyword>
<keyword id="KW-1015">Disulfide bond</keyword>
<keyword id="KW-0325">Glycoprotein</keyword>
<keyword id="KW-0964">Secreted</keyword>
<keyword id="KW-0732">Signal</keyword>